<accession>Q7NAR6</accession>
<protein>
    <recommendedName>
        <fullName evidence="1">Probable GTP-binding protein EngB</fullName>
    </recommendedName>
</protein>
<feature type="chain" id="PRO_0000266894" description="Probable GTP-binding protein EngB">
    <location>
        <begin position="1"/>
        <end position="186"/>
    </location>
</feature>
<feature type="domain" description="EngB-type G" evidence="1">
    <location>
        <begin position="18"/>
        <end position="186"/>
    </location>
</feature>
<feature type="binding site" evidence="1">
    <location>
        <begin position="26"/>
        <end position="33"/>
    </location>
    <ligand>
        <name>GTP</name>
        <dbReference type="ChEBI" id="CHEBI:37565"/>
    </ligand>
</feature>
<feature type="binding site" evidence="1">
    <location>
        <position position="33"/>
    </location>
    <ligand>
        <name>Mg(2+)</name>
        <dbReference type="ChEBI" id="CHEBI:18420"/>
    </ligand>
</feature>
<feature type="binding site" evidence="1">
    <location>
        <begin position="52"/>
        <end position="56"/>
    </location>
    <ligand>
        <name>GTP</name>
        <dbReference type="ChEBI" id="CHEBI:37565"/>
    </ligand>
</feature>
<feature type="binding site" evidence="1">
    <location>
        <position position="54"/>
    </location>
    <ligand>
        <name>Mg(2+)</name>
        <dbReference type="ChEBI" id="CHEBI:18420"/>
    </ligand>
</feature>
<feature type="binding site" evidence="1">
    <location>
        <begin position="69"/>
        <end position="72"/>
    </location>
    <ligand>
        <name>GTP</name>
        <dbReference type="ChEBI" id="CHEBI:37565"/>
    </ligand>
</feature>
<feature type="binding site" evidence="1">
    <location>
        <begin position="135"/>
        <end position="138"/>
    </location>
    <ligand>
        <name>GTP</name>
        <dbReference type="ChEBI" id="CHEBI:37565"/>
    </ligand>
</feature>
<feature type="binding site" evidence="1">
    <location>
        <begin position="166"/>
        <end position="168"/>
    </location>
    <ligand>
        <name>GTP</name>
        <dbReference type="ChEBI" id="CHEBI:37565"/>
    </ligand>
</feature>
<dbReference type="EMBL" id="AE015450">
    <property type="protein sequence ID" value="AAP56919.2"/>
    <property type="molecule type" value="Genomic_DNA"/>
</dbReference>
<dbReference type="SMR" id="Q7NAR6"/>
<dbReference type="KEGG" id="mga:MGA_0339"/>
<dbReference type="HOGENOM" id="CLU_033732_3_2_14"/>
<dbReference type="OrthoDB" id="9804921at2"/>
<dbReference type="Proteomes" id="UP000001418">
    <property type="component" value="Chromosome"/>
</dbReference>
<dbReference type="GO" id="GO:0005829">
    <property type="term" value="C:cytosol"/>
    <property type="evidence" value="ECO:0007669"/>
    <property type="project" value="TreeGrafter"/>
</dbReference>
<dbReference type="GO" id="GO:0005525">
    <property type="term" value="F:GTP binding"/>
    <property type="evidence" value="ECO:0007669"/>
    <property type="project" value="UniProtKB-UniRule"/>
</dbReference>
<dbReference type="GO" id="GO:0046872">
    <property type="term" value="F:metal ion binding"/>
    <property type="evidence" value="ECO:0007669"/>
    <property type="project" value="UniProtKB-KW"/>
</dbReference>
<dbReference type="GO" id="GO:0000917">
    <property type="term" value="P:division septum assembly"/>
    <property type="evidence" value="ECO:0007669"/>
    <property type="project" value="UniProtKB-KW"/>
</dbReference>
<dbReference type="CDD" id="cd01876">
    <property type="entry name" value="YihA_EngB"/>
    <property type="match status" value="1"/>
</dbReference>
<dbReference type="Gene3D" id="3.40.50.300">
    <property type="entry name" value="P-loop containing nucleotide triphosphate hydrolases"/>
    <property type="match status" value="1"/>
</dbReference>
<dbReference type="HAMAP" id="MF_00321">
    <property type="entry name" value="GTPase_EngB"/>
    <property type="match status" value="1"/>
</dbReference>
<dbReference type="InterPro" id="IPR030393">
    <property type="entry name" value="G_ENGB_dom"/>
</dbReference>
<dbReference type="InterPro" id="IPR006073">
    <property type="entry name" value="GTP-bd"/>
</dbReference>
<dbReference type="InterPro" id="IPR019987">
    <property type="entry name" value="GTP-bd_ribosome_bio_YsxC"/>
</dbReference>
<dbReference type="InterPro" id="IPR027417">
    <property type="entry name" value="P-loop_NTPase"/>
</dbReference>
<dbReference type="InterPro" id="IPR005225">
    <property type="entry name" value="Small_GTP-bd"/>
</dbReference>
<dbReference type="NCBIfam" id="TIGR03598">
    <property type="entry name" value="GTPase_YsxC"/>
    <property type="match status" value="1"/>
</dbReference>
<dbReference type="NCBIfam" id="TIGR00231">
    <property type="entry name" value="small_GTP"/>
    <property type="match status" value="1"/>
</dbReference>
<dbReference type="PANTHER" id="PTHR11649:SF13">
    <property type="entry name" value="ENGB-TYPE G DOMAIN-CONTAINING PROTEIN"/>
    <property type="match status" value="1"/>
</dbReference>
<dbReference type="PANTHER" id="PTHR11649">
    <property type="entry name" value="MSS1/TRME-RELATED GTP-BINDING PROTEIN"/>
    <property type="match status" value="1"/>
</dbReference>
<dbReference type="Pfam" id="PF01926">
    <property type="entry name" value="MMR_HSR1"/>
    <property type="match status" value="1"/>
</dbReference>
<dbReference type="SUPFAM" id="SSF52540">
    <property type="entry name" value="P-loop containing nucleoside triphosphate hydrolases"/>
    <property type="match status" value="1"/>
</dbReference>
<dbReference type="PROSITE" id="PS51706">
    <property type="entry name" value="G_ENGB"/>
    <property type="match status" value="1"/>
</dbReference>
<evidence type="ECO:0000255" key="1">
    <source>
        <dbReference type="HAMAP-Rule" id="MF_00321"/>
    </source>
</evidence>
<gene>
    <name evidence="1" type="primary">engB</name>
    <name type="ordered locus">MYCGA5690</name>
    <name type="ORF">MGA_0339</name>
</gene>
<reference key="1">
    <citation type="journal article" date="2003" name="Microbiology">
        <title>The complete genome sequence of the avian pathogen Mycoplasma gallisepticum strain R(low).</title>
        <authorList>
            <person name="Papazisi L."/>
            <person name="Gorton T.S."/>
            <person name="Kutish G."/>
            <person name="Markham P.F."/>
            <person name="Browning G.F."/>
            <person name="Nguyen D.K."/>
            <person name="Swartzell S."/>
            <person name="Madan A."/>
            <person name="Mahairas G."/>
            <person name="Geary S.J."/>
        </authorList>
    </citation>
    <scope>NUCLEOTIDE SEQUENCE [LARGE SCALE GENOMIC DNA]</scope>
    <source>
        <strain>R(low / passage 15 / clone 2)</strain>
    </source>
</reference>
<proteinExistence type="inferred from homology"/>
<comment type="function">
    <text evidence="1">Necessary for normal cell division and for the maintenance of normal septation.</text>
</comment>
<comment type="cofactor">
    <cofactor evidence="1">
        <name>Mg(2+)</name>
        <dbReference type="ChEBI" id="CHEBI:18420"/>
    </cofactor>
</comment>
<comment type="similarity">
    <text evidence="1">Belongs to the TRAFAC class TrmE-Era-EngA-EngB-Septin-like GTPase superfamily. EngB GTPase family.</text>
</comment>
<name>ENGB_MYCGA</name>
<organism>
    <name type="scientific">Mycoplasmoides gallisepticum (strain R(low / passage 15 / clone 2))</name>
    <name type="common">Mycoplasma gallisepticum</name>
    <dbReference type="NCBI Taxonomy" id="710127"/>
    <lineage>
        <taxon>Bacteria</taxon>
        <taxon>Bacillati</taxon>
        <taxon>Mycoplasmatota</taxon>
        <taxon>Mycoplasmoidales</taxon>
        <taxon>Mycoplasmoidaceae</taxon>
        <taxon>Mycoplasmoides</taxon>
    </lineage>
</organism>
<sequence>MNRFIKSATSLKDCINDSKKEVCLIGRSNVGKSTIINGLANAKIAQTSKTPGRTVTMNFYEISNQRIVDLPGYGYARIKKSQKEEISLFLSDYLNHRKNLVGIFLILDLGVITDQDIEIVRLLTTLDVEYYIVFNKIDKYPKSAYINNKEKILDALKVNEDRILLISAKNKQNLNNLMLKIIDVIS</sequence>
<keyword id="KW-0131">Cell cycle</keyword>
<keyword id="KW-0132">Cell division</keyword>
<keyword id="KW-0342">GTP-binding</keyword>
<keyword id="KW-0460">Magnesium</keyword>
<keyword id="KW-0479">Metal-binding</keyword>
<keyword id="KW-0547">Nucleotide-binding</keyword>
<keyword id="KW-1185">Reference proteome</keyword>
<keyword id="KW-0717">Septation</keyword>